<sequence>MVSGMICKAVVLVFGILYPAYNSYKAVRTKNVKEYVRWMMYWIVFALYTVTETIADLTVSWFPLYFELKIAFVVWLLSPYTRGASLLYRKFLHPLLSSKEKEIDDYIVQAKEKGYETMVNFGKQGLNLAANAAVTAAVKSQGAITERLRSFSMHDLTDVQGDETAETRFFPDGQKKPRASVSDSSGFSSLRKDSGDDRTDEDVEVNSEDEVYSQKGLRRSQSMRSVKVIKGRKEIRYGSLKHKPKKRPQLYF</sequence>
<accession>Q5HZP8</accession>
<feature type="chain" id="PRO_0000424022" description="Receptor expression-enhancing protein 3-B">
    <location>
        <begin position="1"/>
        <end position="252"/>
    </location>
</feature>
<feature type="transmembrane region" description="Helical" evidence="2">
    <location>
        <begin position="1"/>
        <end position="21"/>
    </location>
</feature>
<feature type="transmembrane region" description="Helical" evidence="2">
    <location>
        <begin position="35"/>
        <end position="55"/>
    </location>
</feature>
<feature type="transmembrane region" description="Helical" evidence="2">
    <location>
        <begin position="57"/>
        <end position="77"/>
    </location>
</feature>
<feature type="region of interest" description="Disordered" evidence="3">
    <location>
        <begin position="163"/>
        <end position="225"/>
    </location>
</feature>
<feature type="compositionally biased region" description="Acidic residues" evidence="3">
    <location>
        <begin position="198"/>
        <end position="211"/>
    </location>
</feature>
<keyword id="KW-0131">Cell cycle</keyword>
<keyword id="KW-0132">Cell division</keyword>
<keyword id="KW-0256">Endoplasmic reticulum</keyword>
<keyword id="KW-0472">Membrane</keyword>
<keyword id="KW-0493">Microtubule</keyword>
<keyword id="KW-0498">Mitosis</keyword>
<keyword id="KW-1185">Reference proteome</keyword>
<keyword id="KW-0812">Transmembrane</keyword>
<keyword id="KW-1133">Transmembrane helix</keyword>
<dbReference type="EMBL" id="BC088933">
    <property type="protein sequence ID" value="AAH88933.1"/>
    <property type="molecule type" value="mRNA"/>
</dbReference>
<dbReference type="RefSeq" id="NP_001088957.1">
    <property type="nucleotide sequence ID" value="NM_001095488.1"/>
</dbReference>
<dbReference type="DNASU" id="496337"/>
<dbReference type="AGR" id="Xenbase:XB-GENE-17346898"/>
<dbReference type="Xenbase" id="XB-GENE-17346898">
    <property type="gene designation" value="reep3.S"/>
</dbReference>
<dbReference type="Proteomes" id="UP000186698">
    <property type="component" value="Unplaced"/>
</dbReference>
<dbReference type="Bgee" id="496337">
    <property type="expression patterns" value="Expressed in blastula and 19 other cell types or tissues"/>
</dbReference>
<dbReference type="GO" id="GO:0005881">
    <property type="term" value="C:cytoplasmic microtubule"/>
    <property type="evidence" value="ECO:0000318"/>
    <property type="project" value="GO_Central"/>
</dbReference>
<dbReference type="GO" id="GO:0005789">
    <property type="term" value="C:endoplasmic reticulum membrane"/>
    <property type="evidence" value="ECO:0000318"/>
    <property type="project" value="GO_Central"/>
</dbReference>
<dbReference type="GO" id="GO:0071782">
    <property type="term" value="C:endoplasmic reticulum tubular network"/>
    <property type="evidence" value="ECO:0000318"/>
    <property type="project" value="GO_Central"/>
</dbReference>
<dbReference type="GO" id="GO:0008017">
    <property type="term" value="F:microtubule binding"/>
    <property type="evidence" value="ECO:0000318"/>
    <property type="project" value="GO_Central"/>
</dbReference>
<dbReference type="GO" id="GO:0051301">
    <property type="term" value="P:cell division"/>
    <property type="evidence" value="ECO:0007669"/>
    <property type="project" value="UniProtKB-KW"/>
</dbReference>
<dbReference type="GO" id="GO:0071786">
    <property type="term" value="P:endoplasmic reticulum tubular network organization"/>
    <property type="evidence" value="ECO:0000318"/>
    <property type="project" value="GO_Central"/>
</dbReference>
<dbReference type="GO" id="GO:0007084">
    <property type="term" value="P:mitotic nuclear membrane reassembly"/>
    <property type="evidence" value="ECO:0000250"/>
    <property type="project" value="UniProtKB"/>
</dbReference>
<dbReference type="GO" id="GO:0006998">
    <property type="term" value="P:nuclear envelope organization"/>
    <property type="evidence" value="ECO:0000250"/>
    <property type="project" value="UniProtKB"/>
</dbReference>
<dbReference type="InterPro" id="IPR004345">
    <property type="entry name" value="TB2_DP1_HVA22"/>
</dbReference>
<dbReference type="PANTHER" id="PTHR12300">
    <property type="entry name" value="HVA22-LIKE PROTEINS"/>
    <property type="match status" value="1"/>
</dbReference>
<dbReference type="PANTHER" id="PTHR12300:SF39">
    <property type="entry name" value="RECEPTOR EXPRESSION-ENHANCING PROTEIN 3"/>
    <property type="match status" value="1"/>
</dbReference>
<dbReference type="Pfam" id="PF03134">
    <property type="entry name" value="TB2_DP1_HVA22"/>
    <property type="match status" value="1"/>
</dbReference>
<proteinExistence type="evidence at transcript level"/>
<gene>
    <name type="primary">reep3-b</name>
</gene>
<evidence type="ECO:0000250" key="1"/>
<evidence type="ECO:0000255" key="2"/>
<evidence type="ECO:0000256" key="3">
    <source>
        <dbReference type="SAM" id="MobiDB-lite"/>
    </source>
</evidence>
<evidence type="ECO:0000305" key="4"/>
<name>REP3B_XENLA</name>
<protein>
    <recommendedName>
        <fullName>Receptor expression-enhancing protein 3-B</fullName>
    </recommendedName>
</protein>
<organism>
    <name type="scientific">Xenopus laevis</name>
    <name type="common">African clawed frog</name>
    <dbReference type="NCBI Taxonomy" id="8355"/>
    <lineage>
        <taxon>Eukaryota</taxon>
        <taxon>Metazoa</taxon>
        <taxon>Chordata</taxon>
        <taxon>Craniata</taxon>
        <taxon>Vertebrata</taxon>
        <taxon>Euteleostomi</taxon>
        <taxon>Amphibia</taxon>
        <taxon>Batrachia</taxon>
        <taxon>Anura</taxon>
        <taxon>Pipoidea</taxon>
        <taxon>Pipidae</taxon>
        <taxon>Xenopodinae</taxon>
        <taxon>Xenopus</taxon>
        <taxon>Xenopus</taxon>
    </lineage>
</organism>
<comment type="function">
    <text evidence="1">Microtubule-binding protein required to ensure proper cell division and nuclear envelope reassembly by sequestering the endoplasmic reticulum away from chromosomes during mitosis. Probably acts by clearing the endoplasmic reticulum membrane from metaphase chromosomes (By similarity).</text>
</comment>
<comment type="subcellular location">
    <subcellularLocation>
        <location evidence="1">Endoplasmic reticulum membrane</location>
        <topology evidence="1">Multi-pass membrane protein</topology>
    </subcellularLocation>
</comment>
<comment type="similarity">
    <text evidence="4">Belongs to the DP1 family.</text>
</comment>
<reference key="1">
    <citation type="submission" date="2005-01" db="EMBL/GenBank/DDBJ databases">
        <authorList>
            <consortium name="NIH - Xenopus Gene Collection (XGC) project"/>
        </authorList>
    </citation>
    <scope>NUCLEOTIDE SEQUENCE [LARGE SCALE MRNA]</scope>
    <source>
        <tissue>Egg</tissue>
    </source>
</reference>